<name>KCNK1_RABIT</name>
<reference evidence="9" key="1">
    <citation type="submission" date="2004-09" db="EMBL/GenBank/DDBJ databases">
        <title>Ion channels in ocular epithelia.</title>
        <authorList>
            <person name="Rae J.L."/>
        </authorList>
    </citation>
    <scope>NUCLEOTIDE SEQUENCE [MRNA]</scope>
    <source>
        <strain>New Zealand white</strain>
        <tissue>Corneal epithelium</tissue>
    </source>
</reference>
<reference evidence="8" key="2">
    <citation type="journal article" date="1997" name="Am. J. Physiol.">
        <title>Cloning and localization of a double-pore K channel, KCNK1: exclusive expression in distal nephron segments.</title>
        <authorList>
            <person name="Orias M."/>
            <person name="Velazquez H."/>
            <person name="Tung F."/>
            <person name="Lee G."/>
            <person name="Desir G.V."/>
        </authorList>
    </citation>
    <scope>NUCLEOTIDE SEQUENCE [MRNA] OF 1-258</scope>
    <scope>TISSUE SPECIFICITY</scope>
</reference>
<protein>
    <recommendedName>
        <fullName>Potassium channel subfamily K member 1</fullName>
    </recommendedName>
</protein>
<accession>Q5UE96</accession>
<accession>O02821</accession>
<keyword id="KW-1003">Cell membrane</keyword>
<keyword id="KW-0966">Cell projection</keyword>
<keyword id="KW-0968">Cytoplasmic vesicle</keyword>
<keyword id="KW-1015">Disulfide bond</keyword>
<keyword id="KW-0967">Endosome</keyword>
<keyword id="KW-0325">Glycoprotein</keyword>
<keyword id="KW-0407">Ion channel</keyword>
<keyword id="KW-0406">Ion transport</keyword>
<keyword id="KW-1017">Isopeptide bond</keyword>
<keyword id="KW-0472">Membrane</keyword>
<keyword id="KW-0597">Phosphoprotein</keyword>
<keyword id="KW-0630">Potassium</keyword>
<keyword id="KW-0631">Potassium channel</keyword>
<keyword id="KW-0633">Potassium transport</keyword>
<keyword id="KW-1185">Reference proteome</keyword>
<keyword id="KW-0770">Synapse</keyword>
<keyword id="KW-0812">Transmembrane</keyword>
<keyword id="KW-1133">Transmembrane helix</keyword>
<keyword id="KW-0813">Transport</keyword>
<keyword id="KW-0832">Ubl conjugation</keyword>
<feature type="chain" id="PRO_0000299074" description="Potassium channel subfamily K member 1">
    <location>
        <begin position="1"/>
        <end position="336"/>
    </location>
</feature>
<feature type="topological domain" description="Cytoplasmic" evidence="1">
    <location>
        <begin position="1"/>
        <end position="20"/>
    </location>
</feature>
<feature type="transmembrane region" description="Helical" evidence="1">
    <location>
        <begin position="21"/>
        <end position="41"/>
    </location>
</feature>
<feature type="topological domain" description="Extracellular" evidence="1">
    <location>
        <begin position="42"/>
        <end position="103"/>
    </location>
</feature>
<feature type="intramembrane region" description="Helical; Name=Pore helix 1" evidence="1">
    <location>
        <begin position="104"/>
        <end position="116"/>
    </location>
</feature>
<feature type="intramembrane region" evidence="1">
    <location>
        <begin position="117"/>
        <end position="122"/>
    </location>
</feature>
<feature type="topological domain" description="Extracellular" evidence="1">
    <location>
        <begin position="123"/>
        <end position="132"/>
    </location>
</feature>
<feature type="transmembrane region" description="Helical" evidence="1">
    <location>
        <begin position="133"/>
        <end position="156"/>
    </location>
</feature>
<feature type="topological domain" description="Cytoplasmic" evidence="1">
    <location>
        <begin position="157"/>
        <end position="181"/>
    </location>
</feature>
<feature type="transmembrane region" description="Helical" evidence="1">
    <location>
        <begin position="182"/>
        <end position="202"/>
    </location>
</feature>
<feature type="topological domain" description="Extracellular" evidence="1">
    <location>
        <begin position="203"/>
        <end position="211"/>
    </location>
</feature>
<feature type="intramembrane region" description="Helical; Name=Pore helix 2" evidence="1">
    <location>
        <begin position="212"/>
        <end position="224"/>
    </location>
</feature>
<feature type="intramembrane region" evidence="1">
    <location>
        <begin position="225"/>
        <end position="231"/>
    </location>
</feature>
<feature type="topological domain" description="Extracellular" evidence="1">
    <location>
        <begin position="232"/>
        <end position="243"/>
    </location>
</feature>
<feature type="transmembrane region" description="Helical" evidence="1">
    <location>
        <begin position="244"/>
        <end position="267"/>
    </location>
</feature>
<feature type="topological domain" description="Cytoplasmic" evidence="1">
    <location>
        <begin position="268"/>
        <end position="336"/>
    </location>
</feature>
<feature type="region of interest" description="Selectivity filter 1" evidence="1">
    <location>
        <begin position="117"/>
        <end position="122"/>
    </location>
</feature>
<feature type="region of interest" description="Selectivity filter 2" evidence="1">
    <location>
        <begin position="225"/>
        <end position="230"/>
    </location>
</feature>
<feature type="region of interest" description="Important for intracellular retention in recycling endosomes" evidence="1">
    <location>
        <begin position="293"/>
        <end position="299"/>
    </location>
</feature>
<feature type="region of interest" description="Disordered" evidence="5">
    <location>
        <begin position="315"/>
        <end position="336"/>
    </location>
</feature>
<feature type="site" description="Important for increased permeability to Na(+) when K(+) levels are subphysiological" evidence="1">
    <location>
        <position position="118"/>
    </location>
</feature>
<feature type="site" description="Part of a hydrophobic barrier that is stochastically dewetted and limits ion permeability" evidence="1">
    <location>
        <position position="146"/>
    </location>
</feature>
<feature type="site" description="Part of a hydrophobic barrier that is stochastically dewetted and limits ion permeability" evidence="1">
    <location>
        <position position="261"/>
    </location>
</feature>
<feature type="modified residue" description="Phosphoserine" evidence="3">
    <location>
        <position position="326"/>
    </location>
</feature>
<feature type="glycosylation site" description="N-linked (GlcNAc...) asparagine" evidence="4">
    <location>
        <position position="95"/>
    </location>
</feature>
<feature type="disulfide bond" description="Interchain" evidence="1">
    <location>
        <position position="69"/>
    </location>
</feature>
<feature type="cross-link" description="Glycyl lysine isopeptide (Lys-Gly) (interchain with G-Cter in SUMO)" evidence="1">
    <location>
        <position position="274"/>
    </location>
</feature>
<feature type="sequence conflict" description="In Ref. 2; AAB61602." evidence="7" ref="2">
    <original>RS</original>
    <variation>T</variation>
    <location>
        <begin position="18"/>
        <end position="19"/>
    </location>
</feature>
<feature type="sequence conflict" description="In Ref. 2; AAB61602." evidence="7" ref="2">
    <original>G</original>
    <variation>V</variation>
    <location>
        <position position="129"/>
    </location>
</feature>
<evidence type="ECO:0000250" key="1">
    <source>
        <dbReference type="UniProtKB" id="O00180"/>
    </source>
</evidence>
<evidence type="ECO:0000250" key="2">
    <source>
        <dbReference type="UniProtKB" id="O08581"/>
    </source>
</evidence>
<evidence type="ECO:0000250" key="3">
    <source>
        <dbReference type="UniProtKB" id="Q9Z2T2"/>
    </source>
</evidence>
<evidence type="ECO:0000255" key="4"/>
<evidence type="ECO:0000256" key="5">
    <source>
        <dbReference type="SAM" id="MobiDB-lite"/>
    </source>
</evidence>
<evidence type="ECO:0000269" key="6">
    <source>
    </source>
</evidence>
<evidence type="ECO:0000305" key="7"/>
<evidence type="ECO:0000312" key="8">
    <source>
        <dbReference type="EMBL" id="AAB61602.1"/>
    </source>
</evidence>
<evidence type="ECO:0000312" key="9">
    <source>
        <dbReference type="EMBL" id="AAV30846.1"/>
    </source>
</evidence>
<gene>
    <name evidence="9" type="primary">KCNK1</name>
</gene>
<comment type="function">
    <text evidence="1 2 3">Ion channel that contributes to passive transmembrane potassium transport and to the regulation of the resting membrane potential in brain astrocytes, but also in kidney and in other tissues. Forms dimeric channels through which potassium ions pass in accordance with their electrochemical gradient. The channel is selective for K(+) ions at physiological potassium concentrations and at neutral pH, but becomes permeable to Na(+) at subphysiological K(+) levels and upon acidification of the extracellular medium. The homodimer has very low potassium channel activity, when expressed in heterologous systems, and can function as weakly inward rectifying potassium channel (By similarity). Channel activity is modulated by activation of serotonin receptors (By similarity). Heterodimeric channels containing KCNK1 and KCNK2 have much higher activity, and may represent the predominant form in astrocytes (By similarity). Heterodimeric channels containing KCNK1 and KCNK3 or KCNK9 have much higher activity. Heterodimeric channels formed by KCNK1 and KCNK9 may contribute to halothane-sensitive currents (By similarity). Mediates outward rectifying potassium currents in dentate gyrus granule cells and contributes to the regulation of their resting membrane potential (By similarity). Contributes to the regulation of action potential firing in dentate gyrus granule cells and down-regulates their intrinsic excitability (By similarity). In astrocytes, the heterodimer formed by KCNK1 and KCNK2 is required for rapid glutamate release in response to activation of G-protein coupled receptors, such as F2R and CNR1 (By similarity). Required for normal ion and water transport in the kidney (By similarity). Contributes to the regulation of the resting membrane potential of pancreatic beta cells (By similarity). The low channel activity of homodimeric KCNK1 may be due to sumoylation. The low channel activity may be due to rapid internalization from the cell membrane and retention in recycling endosomes (By similarity). Permeable to monovalent cations with ion selectivity for K(+) &gt; Rb(+) &gt;&gt; NH4(+) &gt;&gt; Cs(+) = Na(+) = Li(+).</text>
</comment>
<comment type="catalytic activity">
    <reaction evidence="1">
        <text>K(+)(in) = K(+)(out)</text>
        <dbReference type="Rhea" id="RHEA:29463"/>
        <dbReference type="ChEBI" id="CHEBI:29103"/>
    </reaction>
</comment>
<comment type="catalytic activity">
    <reaction evidence="1">
        <text>NH4(+)(in) = NH4(+)(out)</text>
        <dbReference type="Rhea" id="RHEA:28747"/>
        <dbReference type="ChEBI" id="CHEBI:28938"/>
    </reaction>
</comment>
<comment type="catalytic activity">
    <reaction evidence="1">
        <text>Na(+)(in) = Na(+)(out)</text>
        <dbReference type="Rhea" id="RHEA:34963"/>
        <dbReference type="ChEBI" id="CHEBI:29101"/>
    </reaction>
</comment>
<comment type="catalytic activity">
    <reaction evidence="1">
        <text>Rb(+)(in) = Rb(+)(out)</text>
        <dbReference type="Rhea" id="RHEA:78547"/>
        <dbReference type="ChEBI" id="CHEBI:49847"/>
    </reaction>
</comment>
<comment type="catalytic activity">
    <reaction evidence="1">
        <text>Cs(+)(in) = Cs(+)(out)</text>
        <dbReference type="Rhea" id="RHEA:78555"/>
        <dbReference type="ChEBI" id="CHEBI:49547"/>
    </reaction>
</comment>
<comment type="catalytic activity">
    <reaction evidence="1">
        <text>Li(+)(in) = Li(+)(out)</text>
        <dbReference type="Rhea" id="RHEA:78551"/>
        <dbReference type="ChEBI" id="CHEBI:49713"/>
    </reaction>
</comment>
<comment type="catalytic activity">
    <reaction evidence="2">
        <text>L-glutamate(out) = L-glutamate(in)</text>
        <dbReference type="Rhea" id="RHEA:66336"/>
        <dbReference type="ChEBI" id="CHEBI:29985"/>
    </reaction>
</comment>
<comment type="catalytic activity">
    <reaction evidence="2">
        <text>chloride(in) = chloride(out)</text>
        <dbReference type="Rhea" id="RHEA:29823"/>
        <dbReference type="ChEBI" id="CHEBI:17996"/>
    </reaction>
</comment>
<comment type="subunit">
    <text evidence="1 2">Homodimer; disulfide-linked (By similarity). Heterodimer with KCNK2; disulfide-linked (By similarity). In astrocytes, forms mostly heterodimeric potassium channels with KCNK2, with only a minor proportion of functional channels containing homodimeric KCNK1 (By similarity). Interacts with KCNK3 and KCNK9, forming functional heterodimeric channels (By similarity). Interacts with GNG4 (By similarity). Identified in a complex with PSD and ARF6; interacts only with PSD that is bound to ARF6 (By similarity). Interacts with UBE2I (By similarity).</text>
</comment>
<comment type="subcellular location">
    <subcellularLocation>
        <location evidence="1">Cell membrane</location>
        <topology evidence="1">Multi-pass membrane protein</topology>
    </subcellularLocation>
    <subcellularLocation>
        <location evidence="1">Recycling endosome</location>
    </subcellularLocation>
    <subcellularLocation>
        <location evidence="3">Synaptic cell membrane</location>
    </subcellularLocation>
    <subcellularLocation>
        <location evidence="2">Cytoplasmic vesicle</location>
    </subcellularLocation>
    <subcellularLocation>
        <location evidence="2">Perikaryon</location>
    </subcellularLocation>
    <subcellularLocation>
        <location evidence="2">Cell projection</location>
        <location evidence="2">Dendrite</location>
    </subcellularLocation>
    <subcellularLocation>
        <location evidence="2">Cell projection</location>
    </subcellularLocation>
    <subcellularLocation>
        <location evidence="1">Apical cell membrane</location>
        <topology evidence="1">Multi-pass membrane protein</topology>
    </subcellularLocation>
    <text evidence="1 2 3">The heterodimer with KCNK2 is detected at the astrocyte cell membrane. Not detected at the astrocyte cell membrane when KCNK2 is absent. Detected on neuronal cell bodies, and to a lesser degree on neuronal cell projections. Detected on hippocampus dentate gyrus granule cell bodies and to a lesser degree on proximal dendrites. Detected at the apical cell membrane in stria vascularis in the cochlea. Detected at the apical cell membrane of vestibular dark cells situated between the crista and the utricle in the inner ear. Detected at the apical cell membrane in kidney proximal tubule segment S1 and in subapical compartments in segments S1, S2 and S3. Predominantly in cytoplasmic structures in kidney distal convoluted tubules and collecting ducts (By similarity). Detected at the apical cell membrane of bronchial epithelial cells (By similarity).</text>
</comment>
<comment type="tissue specificity">
    <text evidence="6">Expressed in renal distal tubules, especially in cortical collecting duct and cortical thick ascending limb, with lower levels in the connecting tubule.</text>
</comment>
<comment type="PTM">
    <text evidence="1">Sumoylation is controversial. Sumoylated by UBE2I. Not sumoylated when expressed in xenopus oocytes or mammalian cells. Sumoylation inactivates the channel, but does not interfere with expression at the cell membrane. Sumoylation of a single subunit is sufficient to silence the dimeric channel. Sumoylation of KCNK1 is sufficient to silence heterodimeric channels formed by KCNK1 and KCNK3 or KCNK9. Desumoylated by SENP1; this activates the channel. Desumoylated by SENP1; this strongly increases halothane-mediated activation of heterodimeric channels formed with KCNK9. SENP1 treatment has no effect.</text>
</comment>
<comment type="similarity">
    <text evidence="4">Belongs to the two pore domain potassium channel (TC 1.A.1.8) family.</text>
</comment>
<comment type="sequence caution" evidence="7">
    <conflict type="erroneous initiation">
        <sequence resource="EMBL-CDS" id="AAB61602"/>
    </conflict>
    <text>Truncated N-terminus.</text>
</comment>
<proteinExistence type="evidence at transcript level"/>
<sequence length="336" mass="38076">MLQSLAGSSCVRLVERHRSAWCFGFLVLGYLLYLVFGAVVFSSVELPYEDLLRQELRKLKRRFVEEHECLSEQQLEQFLGRVLEANNYGVSVRSNASGNWNWDFASALFFASTVLSTTGYGHTVPLSDGGKAFCIIYSVIGIPFTLLFLTAVVQRVTVHVTRRPVLYFHVRWGFSKQVVAIVHAVLLGLITVSCFFFIPAAVFSVLEDDWNFLESFYFCFISLSTIGLGDYVPGEGYNQKFRELYKIGITCYLLLGLIAMLVVLETFCELHELKKFRKMFYVKKDKDEDQVHIIEHDQLSFSSITEQAAGMKEDQKQNEPFVATPSSACADGPANH</sequence>
<organism>
    <name type="scientific">Oryctolagus cuniculus</name>
    <name type="common">Rabbit</name>
    <dbReference type="NCBI Taxonomy" id="9986"/>
    <lineage>
        <taxon>Eukaryota</taxon>
        <taxon>Metazoa</taxon>
        <taxon>Chordata</taxon>
        <taxon>Craniata</taxon>
        <taxon>Vertebrata</taxon>
        <taxon>Euteleostomi</taxon>
        <taxon>Mammalia</taxon>
        <taxon>Eutheria</taxon>
        <taxon>Euarchontoglires</taxon>
        <taxon>Glires</taxon>
        <taxon>Lagomorpha</taxon>
        <taxon>Leporidae</taxon>
        <taxon>Oryctolagus</taxon>
    </lineage>
</organism>
<dbReference type="EMBL" id="AY752982">
    <property type="protein sequence ID" value="AAV30846.1"/>
    <property type="molecule type" value="mRNA"/>
</dbReference>
<dbReference type="EMBL" id="AF004695">
    <property type="protein sequence ID" value="AAB61602.1"/>
    <property type="status" value="ALT_INIT"/>
    <property type="molecule type" value="mRNA"/>
</dbReference>
<dbReference type="RefSeq" id="NP_001075649.1">
    <property type="nucleotide sequence ID" value="NM_001082180.1"/>
</dbReference>
<dbReference type="SMR" id="Q5UE96"/>
<dbReference type="FunCoup" id="Q5UE96">
    <property type="interactions" value="60"/>
</dbReference>
<dbReference type="STRING" id="9986.ENSOCUP00000013753"/>
<dbReference type="GlyCosmos" id="Q5UE96">
    <property type="glycosylation" value="1 site, No reported glycans"/>
</dbReference>
<dbReference type="PaxDb" id="9986-ENSOCUP00000013753"/>
<dbReference type="Ensembl" id="ENSOCUT00000016002.2">
    <property type="protein sequence ID" value="ENSOCUP00000013753.2"/>
    <property type="gene ID" value="ENSOCUG00000016003.2"/>
</dbReference>
<dbReference type="GeneID" id="100008962"/>
<dbReference type="KEGG" id="ocu:100008962"/>
<dbReference type="CTD" id="3775"/>
<dbReference type="eggNOG" id="KOG1418">
    <property type="taxonomic scope" value="Eukaryota"/>
</dbReference>
<dbReference type="GeneTree" id="ENSGT00940000155293"/>
<dbReference type="HOGENOM" id="CLU_022504_6_0_1"/>
<dbReference type="InParanoid" id="Q5UE96"/>
<dbReference type="OMA" id="SAWCFGL"/>
<dbReference type="OrthoDB" id="297496at2759"/>
<dbReference type="TreeFam" id="TF313947"/>
<dbReference type="Proteomes" id="UP000001811">
    <property type="component" value="Chromosome 16"/>
</dbReference>
<dbReference type="Bgee" id="ENSOCUG00000016003">
    <property type="expression patterns" value="Expressed in prefrontal cortex and 13 other cell types or tissues"/>
</dbReference>
<dbReference type="GO" id="GO:0016324">
    <property type="term" value="C:apical plasma membrane"/>
    <property type="evidence" value="ECO:0007669"/>
    <property type="project" value="UniProtKB-SubCell"/>
</dbReference>
<dbReference type="GO" id="GO:0030425">
    <property type="term" value="C:dendrite"/>
    <property type="evidence" value="ECO:0007669"/>
    <property type="project" value="UniProtKB-SubCell"/>
</dbReference>
<dbReference type="GO" id="GO:1902937">
    <property type="term" value="C:inward rectifier potassium channel complex"/>
    <property type="evidence" value="ECO:0007669"/>
    <property type="project" value="Ensembl"/>
</dbReference>
<dbReference type="GO" id="GO:0016020">
    <property type="term" value="C:membrane"/>
    <property type="evidence" value="ECO:0000250"/>
    <property type="project" value="UniProtKB"/>
</dbReference>
<dbReference type="GO" id="GO:0043204">
    <property type="term" value="C:perikaryon"/>
    <property type="evidence" value="ECO:0007669"/>
    <property type="project" value="UniProtKB-SubCell"/>
</dbReference>
<dbReference type="GO" id="GO:0005886">
    <property type="term" value="C:plasma membrane"/>
    <property type="evidence" value="ECO:0000250"/>
    <property type="project" value="UniProtKB"/>
</dbReference>
<dbReference type="GO" id="GO:0034705">
    <property type="term" value="C:potassium channel complex"/>
    <property type="evidence" value="ECO:0000250"/>
    <property type="project" value="UniProtKB"/>
</dbReference>
<dbReference type="GO" id="GO:0055037">
    <property type="term" value="C:recycling endosome"/>
    <property type="evidence" value="ECO:0007669"/>
    <property type="project" value="UniProtKB-SubCell"/>
</dbReference>
<dbReference type="GO" id="GO:0097060">
    <property type="term" value="C:synaptic membrane"/>
    <property type="evidence" value="ECO:0007669"/>
    <property type="project" value="UniProtKB-SubCell"/>
</dbReference>
<dbReference type="GO" id="GO:0042802">
    <property type="term" value="F:identical protein binding"/>
    <property type="evidence" value="ECO:0000250"/>
    <property type="project" value="UniProtKB"/>
</dbReference>
<dbReference type="GO" id="GO:0005242">
    <property type="term" value="F:inward rectifier potassium channel activity"/>
    <property type="evidence" value="ECO:0007669"/>
    <property type="project" value="Ensembl"/>
</dbReference>
<dbReference type="GO" id="GO:0022834">
    <property type="term" value="F:ligand-gated channel activity"/>
    <property type="evidence" value="ECO:0000250"/>
    <property type="project" value="UniProtKB"/>
</dbReference>
<dbReference type="GO" id="GO:0015271">
    <property type="term" value="F:outward rectifier potassium channel activity"/>
    <property type="evidence" value="ECO:0007669"/>
    <property type="project" value="TreeGrafter"/>
</dbReference>
<dbReference type="GO" id="GO:0005267">
    <property type="term" value="F:potassium channel activity"/>
    <property type="evidence" value="ECO:0000250"/>
    <property type="project" value="UniProtKB"/>
</dbReference>
<dbReference type="GO" id="GO:0022841">
    <property type="term" value="F:potassium ion leak channel activity"/>
    <property type="evidence" value="ECO:0000250"/>
    <property type="project" value="UniProtKB"/>
</dbReference>
<dbReference type="GO" id="GO:0046982">
    <property type="term" value="F:protein heterodimerization activity"/>
    <property type="evidence" value="ECO:0000250"/>
    <property type="project" value="UniProtKB"/>
</dbReference>
<dbReference type="GO" id="GO:0005272">
    <property type="term" value="F:sodium channel activity"/>
    <property type="evidence" value="ECO:0000250"/>
    <property type="project" value="UniProtKB"/>
</dbReference>
<dbReference type="GO" id="GO:1905030">
    <property type="term" value="F:voltage-gated monoatomic ion channel activity involved in regulation of postsynaptic membrane potential"/>
    <property type="evidence" value="ECO:0007669"/>
    <property type="project" value="Ensembl"/>
</dbReference>
<dbReference type="GO" id="GO:1902476">
    <property type="term" value="P:chloride transmembrane transport"/>
    <property type="evidence" value="ECO:0000250"/>
    <property type="project" value="UniProtKB"/>
</dbReference>
<dbReference type="GO" id="GO:0014047">
    <property type="term" value="P:glutamate secretion"/>
    <property type="evidence" value="ECO:0000250"/>
    <property type="project" value="UniProtKB"/>
</dbReference>
<dbReference type="GO" id="GO:0071805">
    <property type="term" value="P:potassium ion transmembrane transport"/>
    <property type="evidence" value="ECO:0000250"/>
    <property type="project" value="UniProtKB"/>
</dbReference>
<dbReference type="GO" id="GO:0060075">
    <property type="term" value="P:regulation of resting membrane potential"/>
    <property type="evidence" value="ECO:0000250"/>
    <property type="project" value="UniProtKB"/>
</dbReference>
<dbReference type="GO" id="GO:0035725">
    <property type="term" value="P:sodium ion transmembrane transport"/>
    <property type="evidence" value="ECO:0000250"/>
    <property type="project" value="UniProtKB"/>
</dbReference>
<dbReference type="GO" id="GO:0030322">
    <property type="term" value="P:stabilization of membrane potential"/>
    <property type="evidence" value="ECO:0007669"/>
    <property type="project" value="TreeGrafter"/>
</dbReference>
<dbReference type="FunFam" id="1.10.287.70:FF:000076">
    <property type="entry name" value="Potassium channel subfamily K member"/>
    <property type="match status" value="1"/>
</dbReference>
<dbReference type="Gene3D" id="1.10.287.70">
    <property type="match status" value="1"/>
</dbReference>
<dbReference type="InterPro" id="IPR003280">
    <property type="entry name" value="2pore_dom_K_chnl"/>
</dbReference>
<dbReference type="InterPro" id="IPR003092">
    <property type="entry name" value="2pore_dom_K_chnl_TASK"/>
</dbReference>
<dbReference type="InterPro" id="IPR005408">
    <property type="entry name" value="2pore_dom_K_chnl_TWIK"/>
</dbReference>
<dbReference type="InterPro" id="IPR001779">
    <property type="entry name" value="2pore_dom_K_chnl_TWIK1"/>
</dbReference>
<dbReference type="InterPro" id="IPR013099">
    <property type="entry name" value="K_chnl_dom"/>
</dbReference>
<dbReference type="PANTHER" id="PTHR11003:SF59">
    <property type="entry name" value="POTASSIUM CHANNEL SUBFAMILY K MEMBER 1"/>
    <property type="match status" value="1"/>
</dbReference>
<dbReference type="PANTHER" id="PTHR11003">
    <property type="entry name" value="POTASSIUM CHANNEL, SUBFAMILY K"/>
    <property type="match status" value="1"/>
</dbReference>
<dbReference type="Pfam" id="PF07885">
    <property type="entry name" value="Ion_trans_2"/>
    <property type="match status" value="2"/>
</dbReference>
<dbReference type="PIRSF" id="PIRSF038061">
    <property type="entry name" value="K_channel_subfamily_K_type"/>
    <property type="match status" value="1"/>
</dbReference>
<dbReference type="PRINTS" id="PR01333">
    <property type="entry name" value="2POREKCHANEL"/>
</dbReference>
<dbReference type="PRINTS" id="PR01096">
    <property type="entry name" value="TWIK1CHANNEL"/>
</dbReference>
<dbReference type="PRINTS" id="PR01586">
    <property type="entry name" value="TWIKCHANNEL"/>
</dbReference>
<dbReference type="SUPFAM" id="SSF81324">
    <property type="entry name" value="Voltage-gated potassium channels"/>
    <property type="match status" value="2"/>
</dbReference>